<proteinExistence type="evidence at protein level"/>
<protein>
    <recommendedName>
        <fullName evidence="10">Sperm-associated microtubule inner protein 4</fullName>
    </recommendedName>
</protein>
<reference key="1">
    <citation type="journal article" date="2004" name="Nat. Genet.">
        <title>Complete sequencing and characterization of 21,243 full-length human cDNAs.</title>
        <authorList>
            <person name="Ota T."/>
            <person name="Suzuki Y."/>
            <person name="Nishikawa T."/>
            <person name="Otsuki T."/>
            <person name="Sugiyama T."/>
            <person name="Irie R."/>
            <person name="Wakamatsu A."/>
            <person name="Hayashi K."/>
            <person name="Sato H."/>
            <person name="Nagai K."/>
            <person name="Kimura K."/>
            <person name="Makita H."/>
            <person name="Sekine M."/>
            <person name="Obayashi M."/>
            <person name="Nishi T."/>
            <person name="Shibahara T."/>
            <person name="Tanaka T."/>
            <person name="Ishii S."/>
            <person name="Yamamoto J."/>
            <person name="Saito K."/>
            <person name="Kawai Y."/>
            <person name="Isono Y."/>
            <person name="Nakamura Y."/>
            <person name="Nagahari K."/>
            <person name="Murakami K."/>
            <person name="Yasuda T."/>
            <person name="Iwayanagi T."/>
            <person name="Wagatsuma M."/>
            <person name="Shiratori A."/>
            <person name="Sudo H."/>
            <person name="Hosoiri T."/>
            <person name="Kaku Y."/>
            <person name="Kodaira H."/>
            <person name="Kondo H."/>
            <person name="Sugawara M."/>
            <person name="Takahashi M."/>
            <person name="Kanda K."/>
            <person name="Yokoi T."/>
            <person name="Furuya T."/>
            <person name="Kikkawa E."/>
            <person name="Omura Y."/>
            <person name="Abe K."/>
            <person name="Kamihara K."/>
            <person name="Katsuta N."/>
            <person name="Sato K."/>
            <person name="Tanikawa M."/>
            <person name="Yamazaki M."/>
            <person name="Ninomiya K."/>
            <person name="Ishibashi T."/>
            <person name="Yamashita H."/>
            <person name="Murakawa K."/>
            <person name="Fujimori K."/>
            <person name="Tanai H."/>
            <person name="Kimata M."/>
            <person name="Watanabe M."/>
            <person name="Hiraoka S."/>
            <person name="Chiba Y."/>
            <person name="Ishida S."/>
            <person name="Ono Y."/>
            <person name="Takiguchi S."/>
            <person name="Watanabe S."/>
            <person name="Yosida M."/>
            <person name="Hotuta T."/>
            <person name="Kusano J."/>
            <person name="Kanehori K."/>
            <person name="Takahashi-Fujii A."/>
            <person name="Hara H."/>
            <person name="Tanase T.-O."/>
            <person name="Nomura Y."/>
            <person name="Togiya S."/>
            <person name="Komai F."/>
            <person name="Hara R."/>
            <person name="Takeuchi K."/>
            <person name="Arita M."/>
            <person name="Imose N."/>
            <person name="Musashino K."/>
            <person name="Yuuki H."/>
            <person name="Oshima A."/>
            <person name="Sasaki N."/>
            <person name="Aotsuka S."/>
            <person name="Yoshikawa Y."/>
            <person name="Matsunawa H."/>
            <person name="Ichihara T."/>
            <person name="Shiohata N."/>
            <person name="Sano S."/>
            <person name="Moriya S."/>
            <person name="Momiyama H."/>
            <person name="Satoh N."/>
            <person name="Takami S."/>
            <person name="Terashima Y."/>
            <person name="Suzuki O."/>
            <person name="Nakagawa S."/>
            <person name="Senoh A."/>
            <person name="Mizoguchi H."/>
            <person name="Goto Y."/>
            <person name="Shimizu F."/>
            <person name="Wakebe H."/>
            <person name="Hishigaki H."/>
            <person name="Watanabe T."/>
            <person name="Sugiyama A."/>
            <person name="Takemoto M."/>
            <person name="Kawakami B."/>
            <person name="Yamazaki M."/>
            <person name="Watanabe K."/>
            <person name="Kumagai A."/>
            <person name="Itakura S."/>
            <person name="Fukuzumi Y."/>
            <person name="Fujimori Y."/>
            <person name="Komiyama M."/>
            <person name="Tashiro H."/>
            <person name="Tanigami A."/>
            <person name="Fujiwara T."/>
            <person name="Ono T."/>
            <person name="Yamada K."/>
            <person name="Fujii Y."/>
            <person name="Ozaki K."/>
            <person name="Hirao M."/>
            <person name="Ohmori Y."/>
            <person name="Kawabata A."/>
            <person name="Hikiji T."/>
            <person name="Kobatake N."/>
            <person name="Inagaki H."/>
            <person name="Ikema Y."/>
            <person name="Okamoto S."/>
            <person name="Okitani R."/>
            <person name="Kawakami T."/>
            <person name="Noguchi S."/>
            <person name="Itoh T."/>
            <person name="Shigeta K."/>
            <person name="Senba T."/>
            <person name="Matsumura K."/>
            <person name="Nakajima Y."/>
            <person name="Mizuno T."/>
            <person name="Morinaga M."/>
            <person name="Sasaki M."/>
            <person name="Togashi T."/>
            <person name="Oyama M."/>
            <person name="Hata H."/>
            <person name="Watanabe M."/>
            <person name="Komatsu T."/>
            <person name="Mizushima-Sugano J."/>
            <person name="Satoh T."/>
            <person name="Shirai Y."/>
            <person name="Takahashi Y."/>
            <person name="Nakagawa K."/>
            <person name="Okumura K."/>
            <person name="Nagase T."/>
            <person name="Nomura N."/>
            <person name="Kikuchi H."/>
            <person name="Masuho Y."/>
            <person name="Yamashita R."/>
            <person name="Nakai K."/>
            <person name="Yada T."/>
            <person name="Nakamura Y."/>
            <person name="Ohara O."/>
            <person name="Isogai T."/>
            <person name="Sugano S."/>
        </authorList>
    </citation>
    <scope>NUCLEOTIDE SEQUENCE [LARGE SCALE MRNA]</scope>
    <scope>VARIANTS THR-158; SER-187 AND ARG-300</scope>
    <source>
        <tissue>Spleen</tissue>
        <tissue>Stomach</tissue>
    </source>
</reference>
<reference key="2">
    <citation type="journal article" date="2003" name="Nature">
        <title>The DNA sequence of human chromosome 7.</title>
        <authorList>
            <person name="Hillier L.W."/>
            <person name="Fulton R.S."/>
            <person name="Fulton L.A."/>
            <person name="Graves T.A."/>
            <person name="Pepin K.H."/>
            <person name="Wagner-McPherson C."/>
            <person name="Layman D."/>
            <person name="Maas J."/>
            <person name="Jaeger S."/>
            <person name="Walker R."/>
            <person name="Wylie K."/>
            <person name="Sekhon M."/>
            <person name="Becker M.C."/>
            <person name="O'Laughlin M.D."/>
            <person name="Schaller M.E."/>
            <person name="Fewell G.A."/>
            <person name="Delehaunty K.D."/>
            <person name="Miner T.L."/>
            <person name="Nash W.E."/>
            <person name="Cordes M."/>
            <person name="Du H."/>
            <person name="Sun H."/>
            <person name="Edwards J."/>
            <person name="Bradshaw-Cordum H."/>
            <person name="Ali J."/>
            <person name="Andrews S."/>
            <person name="Isak A."/>
            <person name="Vanbrunt A."/>
            <person name="Nguyen C."/>
            <person name="Du F."/>
            <person name="Lamar B."/>
            <person name="Courtney L."/>
            <person name="Kalicki J."/>
            <person name="Ozersky P."/>
            <person name="Bielicki L."/>
            <person name="Scott K."/>
            <person name="Holmes A."/>
            <person name="Harkins R."/>
            <person name="Harris A."/>
            <person name="Strong C.M."/>
            <person name="Hou S."/>
            <person name="Tomlinson C."/>
            <person name="Dauphin-Kohlberg S."/>
            <person name="Kozlowicz-Reilly A."/>
            <person name="Leonard S."/>
            <person name="Rohlfing T."/>
            <person name="Rock S.M."/>
            <person name="Tin-Wollam A.-M."/>
            <person name="Abbott A."/>
            <person name="Minx P."/>
            <person name="Maupin R."/>
            <person name="Strowmatt C."/>
            <person name="Latreille P."/>
            <person name="Miller N."/>
            <person name="Johnson D."/>
            <person name="Murray J."/>
            <person name="Woessner J.P."/>
            <person name="Wendl M.C."/>
            <person name="Yang S.-P."/>
            <person name="Schultz B.R."/>
            <person name="Wallis J.W."/>
            <person name="Spieth J."/>
            <person name="Bieri T.A."/>
            <person name="Nelson J.O."/>
            <person name="Berkowicz N."/>
            <person name="Wohldmann P.E."/>
            <person name="Cook L.L."/>
            <person name="Hickenbotham M.T."/>
            <person name="Eldred J."/>
            <person name="Williams D."/>
            <person name="Bedell J.A."/>
            <person name="Mardis E.R."/>
            <person name="Clifton S.W."/>
            <person name="Chissoe S.L."/>
            <person name="Marra M.A."/>
            <person name="Raymond C."/>
            <person name="Haugen E."/>
            <person name="Gillett W."/>
            <person name="Zhou Y."/>
            <person name="James R."/>
            <person name="Phelps K."/>
            <person name="Iadanoto S."/>
            <person name="Bubb K."/>
            <person name="Simms E."/>
            <person name="Levy R."/>
            <person name="Clendenning J."/>
            <person name="Kaul R."/>
            <person name="Kent W.J."/>
            <person name="Furey T.S."/>
            <person name="Baertsch R.A."/>
            <person name="Brent M.R."/>
            <person name="Keibler E."/>
            <person name="Flicek P."/>
            <person name="Bork P."/>
            <person name="Suyama M."/>
            <person name="Bailey J.A."/>
            <person name="Portnoy M.E."/>
            <person name="Torrents D."/>
            <person name="Chinwalla A.T."/>
            <person name="Gish W.R."/>
            <person name="Eddy S.R."/>
            <person name="McPherson J.D."/>
            <person name="Olson M.V."/>
            <person name="Eichler E.E."/>
            <person name="Green E.D."/>
            <person name="Waterston R.H."/>
            <person name="Wilson R.K."/>
        </authorList>
    </citation>
    <scope>NUCLEOTIDE SEQUENCE [LARGE SCALE GENOMIC DNA]</scope>
</reference>
<reference key="3">
    <citation type="submission" date="2005-07" db="EMBL/GenBank/DDBJ databases">
        <authorList>
            <person name="Mural R.J."/>
            <person name="Istrail S."/>
            <person name="Sutton G.G."/>
            <person name="Florea L."/>
            <person name="Halpern A.L."/>
            <person name="Mobarry C.M."/>
            <person name="Lippert R."/>
            <person name="Walenz B."/>
            <person name="Shatkay H."/>
            <person name="Dew I."/>
            <person name="Miller J.R."/>
            <person name="Flanigan M.J."/>
            <person name="Edwards N.J."/>
            <person name="Bolanos R."/>
            <person name="Fasulo D."/>
            <person name="Halldorsson B.V."/>
            <person name="Hannenhalli S."/>
            <person name="Turner R."/>
            <person name="Yooseph S."/>
            <person name="Lu F."/>
            <person name="Nusskern D.R."/>
            <person name="Shue B.C."/>
            <person name="Zheng X.H."/>
            <person name="Zhong F."/>
            <person name="Delcher A.L."/>
            <person name="Huson D.H."/>
            <person name="Kravitz S.A."/>
            <person name="Mouchard L."/>
            <person name="Reinert K."/>
            <person name="Remington K.A."/>
            <person name="Clark A.G."/>
            <person name="Waterman M.S."/>
            <person name="Eichler E.E."/>
            <person name="Adams M.D."/>
            <person name="Hunkapiller M.W."/>
            <person name="Myers E.W."/>
            <person name="Venter J.C."/>
        </authorList>
    </citation>
    <scope>NUCLEOTIDE SEQUENCE [LARGE SCALE GENOMIC DNA]</scope>
    <scope>VARIANTS THR-158; SER-187 AND ARG-300</scope>
</reference>
<reference key="4">
    <citation type="journal article" date="2004" name="Genome Res.">
        <title>The status, quality, and expansion of the NIH full-length cDNA project: the Mammalian Gene Collection (MGC).</title>
        <authorList>
            <consortium name="The MGC Project Team"/>
        </authorList>
    </citation>
    <scope>NUCLEOTIDE SEQUENCE [LARGE SCALE MRNA]</scope>
    <scope>VARIANTS CYS-82; GLN-143; SER-187; GLN-238; ARG-300 AND ASP-518</scope>
    <source>
        <tissue>Kidney</tissue>
        <tissue>Testis</tissue>
    </source>
</reference>
<reference key="5">
    <citation type="journal article" date="2007" name="BMC Genomics">
        <title>The full-ORF clone resource of the German cDNA consortium.</title>
        <authorList>
            <person name="Bechtel S."/>
            <person name="Rosenfelder H."/>
            <person name="Duda A."/>
            <person name="Schmidt C.P."/>
            <person name="Ernst U."/>
            <person name="Wellenreuther R."/>
            <person name="Mehrle A."/>
            <person name="Schuster C."/>
            <person name="Bahr A."/>
            <person name="Bloecker H."/>
            <person name="Heubner D."/>
            <person name="Hoerlein A."/>
            <person name="Michel G."/>
            <person name="Wedler H."/>
            <person name="Koehrer K."/>
            <person name="Ottenwaelder B."/>
            <person name="Poustka A."/>
            <person name="Wiemann S."/>
            <person name="Schupp I."/>
        </authorList>
    </citation>
    <scope>NUCLEOTIDE SEQUENCE [LARGE SCALE MRNA] OF 124-590</scope>
    <scope>VARIANTS THR-158; SER-187 AND ARG-300</scope>
    <source>
        <tissue>Small intestine</tissue>
    </source>
</reference>
<reference key="6">
    <citation type="journal article" date="2014" name="J. Cell Sci.">
        <title>Proteomic analysis of mammalian sperm cells identifies new components of the centrosome.</title>
        <authorList>
            <person name="Firat-Karalar E.N."/>
            <person name="Sante J."/>
            <person name="Elliott S."/>
            <person name="Stearns T."/>
        </authorList>
    </citation>
    <scope>SUBCELLULAR LOCATION</scope>
</reference>
<reference key="7">
    <citation type="journal article" date="2017" name="Nat. Struct. Mol. Biol.">
        <title>Site-specific mapping of the human SUMO proteome reveals co-modification with phosphorylation.</title>
        <authorList>
            <person name="Hendriks I.A."/>
            <person name="Lyon D."/>
            <person name="Young C."/>
            <person name="Jensen L.J."/>
            <person name="Vertegaal A.C."/>
            <person name="Nielsen M.L."/>
        </authorList>
    </citation>
    <scope>SUMOYLATION [LARGE SCALE ANALYSIS] AT LYS-427 AND LYS-545</scope>
    <scope>IDENTIFICATION BY MASS SPECTROMETRY [LARGE SCALE ANALYSIS]</scope>
</reference>
<reference key="8">
    <citation type="journal article" date="2020" name="Biol. Reprod.">
        <title>CRISPR/Cas9-based genome editing in mice uncovers 13 testis- or epididymis-enriched genes individually dispensable for male reproduction.</title>
        <authorList>
            <person name="Sun J."/>
            <person name="Lu Y."/>
            <person name="Nozawa K."/>
            <person name="Xu Z."/>
            <person name="Morohoshi A."/>
            <person name="Castaneda J.M."/>
            <person name="Noda T."/>
            <person name="Miyata H."/>
            <person name="Abbasi F."/>
            <person name="Shawki H.H."/>
            <person name="Takahashi S."/>
            <person name="Devlin D.J."/>
            <person name="Yu Z."/>
            <person name="Matzuk R.M."/>
            <person name="Garcia T.X."/>
            <person name="Matzuk M.M."/>
            <person name="Ikawa M."/>
        </authorList>
    </citation>
    <scope>TISSUE SPECIFICITY</scope>
</reference>
<evidence type="ECO:0000250" key="1">
    <source>
        <dbReference type="UniProtKB" id="E1B9R1"/>
    </source>
</evidence>
<evidence type="ECO:0000250" key="2">
    <source>
        <dbReference type="UniProtKB" id="Q6AYM0"/>
    </source>
</evidence>
<evidence type="ECO:0000269" key="3">
    <source>
    </source>
</evidence>
<evidence type="ECO:0000269" key="4">
    <source>
    </source>
</evidence>
<evidence type="ECO:0000269" key="5">
    <source>
    </source>
</evidence>
<evidence type="ECO:0000269" key="6">
    <source>
    </source>
</evidence>
<evidence type="ECO:0000269" key="7">
    <source>
    </source>
</evidence>
<evidence type="ECO:0000269" key="8">
    <source ref="3"/>
</evidence>
<evidence type="ECO:0000305" key="9"/>
<evidence type="ECO:0000312" key="10">
    <source>
        <dbReference type="HGNC" id="HGNC:21722"/>
    </source>
</evidence>
<evidence type="ECO:0007744" key="11">
    <source>
    </source>
</evidence>
<comment type="function">
    <text evidence="1">Microtubule inner protein (MIP) part of the dynein-decorated doublet microtubules (DMTs) in flagellum axoneme. May serve to reinforce and thus stabilize the microtubule structure in the sperm flagella.</text>
</comment>
<comment type="interaction">
    <interactant intactId="EBI-10174456">
        <id>Q8N865</id>
    </interactant>
    <interactant intactId="EBI-21535880">
        <id>Q92870-2</id>
        <label>APBB2</label>
    </interactant>
    <organismsDiffer>false</organismsDiffer>
    <experiments>3</experiments>
</comment>
<comment type="interaction">
    <interactant intactId="EBI-10174456">
        <id>Q8N865</id>
    </interactant>
    <interactant intactId="EBI-946046">
        <id>P54252</id>
        <label>ATXN3</label>
    </interactant>
    <organismsDiffer>false</organismsDiffer>
    <experiments>3</experiments>
</comment>
<comment type="interaction">
    <interactant intactId="EBI-10174456">
        <id>Q8N865</id>
    </interactant>
    <interactant intactId="EBI-765407">
        <id>P41182</id>
        <label>BCL6</label>
    </interactant>
    <organismsDiffer>false</organismsDiffer>
    <experiments>3</experiments>
</comment>
<comment type="interaction">
    <interactant intactId="EBI-10174456">
        <id>Q8N865</id>
    </interactant>
    <interactant intactId="EBI-11980535">
        <id>P51800-3</id>
        <label>CLCNKA</label>
    </interactant>
    <organismsDiffer>false</organismsDiffer>
    <experiments>3</experiments>
</comment>
<comment type="interaction">
    <interactant intactId="EBI-10174456">
        <id>Q8N865</id>
    </interactant>
    <interactant intactId="EBI-10192241">
        <id>O95833</id>
        <label>CLIC3</label>
    </interactant>
    <organismsDiffer>false</organismsDiffer>
    <experiments>3</experiments>
</comment>
<comment type="interaction">
    <interactant intactId="EBI-10174456">
        <id>Q8N865</id>
    </interactant>
    <interactant intactId="EBI-3867333">
        <id>A8MQ03</id>
        <label>CYSRT1</label>
    </interactant>
    <organismsDiffer>false</organismsDiffer>
    <experiments>3</experiments>
</comment>
<comment type="interaction">
    <interactant intactId="EBI-10174456">
        <id>Q8N865</id>
    </interactant>
    <interactant intactId="EBI-747754">
        <id>P28799</id>
        <label>GRN</label>
    </interactant>
    <organismsDiffer>false</organismsDiffer>
    <experiments>3</experiments>
</comment>
<comment type="interaction">
    <interactant intactId="EBI-10174456">
        <id>Q8N865</id>
    </interactant>
    <interactant intactId="EBI-7116203">
        <id>O75031</id>
        <label>HSF2BP</label>
    </interactant>
    <organismsDiffer>false</organismsDiffer>
    <experiments>3</experiments>
</comment>
<comment type="interaction">
    <interactant intactId="EBI-10174456">
        <id>Q8N865</id>
    </interactant>
    <interactant intactId="EBI-466029">
        <id>P42858</id>
        <label>HTT</label>
    </interactant>
    <organismsDiffer>false</organismsDiffer>
    <experiments>3</experiments>
</comment>
<comment type="interaction">
    <interactant intactId="EBI-10174456">
        <id>Q8N865</id>
    </interactant>
    <interactant intactId="EBI-4397613">
        <id>Q7L273</id>
        <label>KCTD9</label>
    </interactant>
    <organismsDiffer>false</organismsDiffer>
    <experiments>3</experiments>
</comment>
<comment type="interaction">
    <interactant intactId="EBI-10174456">
        <id>Q8N865</id>
    </interactant>
    <interactant intactId="EBI-10975473">
        <id>O60333-2</id>
        <label>KIF1B</label>
    </interactant>
    <organismsDiffer>false</organismsDiffer>
    <experiments>3</experiments>
</comment>
<comment type="interaction">
    <interactant intactId="EBI-10174456">
        <id>Q8N865</id>
    </interactant>
    <interactant intactId="EBI-475646">
        <id>P07196</id>
        <label>NEFL</label>
    </interactant>
    <organismsDiffer>false</organismsDiffer>
    <experiments>3</experiments>
</comment>
<comment type="interaction">
    <interactant intactId="EBI-10174456">
        <id>Q8N865</id>
    </interactant>
    <interactant intactId="EBI-536879">
        <id>O43482</id>
        <label>OIP5</label>
    </interactant>
    <organismsDiffer>false</organismsDiffer>
    <experiments>3</experiments>
</comment>
<comment type="interaction">
    <interactant intactId="EBI-10174456">
        <id>Q8N865</id>
    </interactant>
    <interactant intactId="EBI-357275">
        <id>Q99471</id>
        <label>PFDN5</label>
    </interactant>
    <organismsDiffer>false</organismsDiffer>
    <experiments>3</experiments>
</comment>
<comment type="interaction">
    <interactant intactId="EBI-10174456">
        <id>Q8N865</id>
    </interactant>
    <interactant intactId="EBI-721853">
        <id>O14832</id>
        <label>PHYH</label>
    </interactant>
    <organismsDiffer>false</organismsDiffer>
    <experiments>3</experiments>
</comment>
<comment type="interaction">
    <interactant intactId="EBI-10174456">
        <id>Q8N865</id>
    </interactant>
    <interactant intactId="EBI-749195">
        <id>P60891</id>
        <label>PRPS1</label>
    </interactant>
    <organismsDiffer>false</organismsDiffer>
    <experiments>3</experiments>
</comment>
<comment type="interaction">
    <interactant intactId="EBI-10174456">
        <id>Q8N865</id>
    </interactant>
    <interactant intactId="EBI-396669">
        <id>Q9Y3C5</id>
        <label>RNF11</label>
    </interactant>
    <organismsDiffer>false</organismsDiffer>
    <experiments>3</experiments>
</comment>
<comment type="interaction">
    <interactant intactId="EBI-10174456">
        <id>Q8N865</id>
    </interactant>
    <interactant intactId="EBI-10239812">
        <id>Q96M29</id>
        <label>TEKT5</label>
    </interactant>
    <organismsDiffer>false</organismsDiffer>
    <experiments>3</experiments>
</comment>
<comment type="interaction">
    <interactant intactId="EBI-10174456">
        <id>Q8N865</id>
    </interactant>
    <interactant intactId="EBI-10174421">
        <id>A8K5H9</id>
    </interactant>
    <organismsDiffer>false</organismsDiffer>
    <experiments>3</experiments>
</comment>
<comment type="subcellular location">
    <subcellularLocation>
        <location evidence="6">Cytoplasm</location>
        <location evidence="6">Cytoskeleton</location>
        <location evidence="6">Microtubule organizing center</location>
        <location evidence="6">Centrosome</location>
    </subcellularLocation>
    <subcellularLocation>
        <location evidence="1">Cytoplasm</location>
        <location evidence="1">Cytoskeleton</location>
        <location evidence="1">Flagellum axoneme</location>
    </subcellularLocation>
    <text evidence="1">Localizes to the A-tubules of DMTs.</text>
</comment>
<comment type="tissue specificity">
    <text evidence="7">Predominantly expressed in the testes.</text>
</comment>
<comment type="sequence caution" evidence="9">
    <conflict type="erroneous gene model prediction">
        <sequence resource="EMBL-CDS" id="AAP22338"/>
    </conflict>
</comment>
<comment type="sequence caution" evidence="9">
    <conflict type="erroneous initiation">
        <sequence resource="EMBL-CDS" id="BAC05255"/>
    </conflict>
</comment>
<name>SMIP4_HUMAN</name>
<feature type="chain" id="PRO_0000089587" description="Sperm-associated microtubule inner protein 4">
    <location>
        <begin position="1"/>
        <end position="590"/>
    </location>
</feature>
<feature type="modified residue" description="Phosphothreonine" evidence="2">
    <location>
        <position position="219"/>
    </location>
</feature>
<feature type="modified residue" description="Phosphoserine" evidence="2">
    <location>
        <position position="407"/>
    </location>
</feature>
<feature type="modified residue" description="Phosphoserine" evidence="2">
    <location>
        <position position="422"/>
    </location>
</feature>
<feature type="modified residue" description="Phosphotyrosine" evidence="2">
    <location>
        <position position="442"/>
    </location>
</feature>
<feature type="modified residue" description="Phosphoserine" evidence="2">
    <location>
        <position position="485"/>
    </location>
</feature>
<feature type="modified residue" description="Phosphoserine" evidence="2">
    <location>
        <position position="547"/>
    </location>
</feature>
<feature type="cross-link" description="Glycyl lysine isopeptide (Lys-Gly) (interchain with G-Cter in SUMO2)" evidence="11">
    <location>
        <position position="427"/>
    </location>
</feature>
<feature type="cross-link" description="Glycyl lysine isopeptide (Lys-Gly) (interchain with G-Cter in SUMO2)" evidence="11">
    <location>
        <position position="545"/>
    </location>
</feature>
<feature type="sequence variant" id="VAR_056809" description="In dbSNP:rs11980216.">
    <original>E</original>
    <variation>K</variation>
    <location>
        <position position="13"/>
    </location>
</feature>
<feature type="sequence variant" id="VAR_022781" description="In dbSNP:rs2717858." evidence="4">
    <original>Y</original>
    <variation>C</variation>
    <location>
        <position position="82"/>
    </location>
</feature>
<feature type="sequence variant" id="VAR_056810" description="In dbSNP:rs3213642.">
    <original>R</original>
    <variation>C</variation>
    <location>
        <position position="86"/>
    </location>
</feature>
<feature type="sequence variant" id="VAR_060608" description="In dbSNP:rs17855102." evidence="4">
    <original>P</original>
    <variation>Q</variation>
    <location>
        <position position="143"/>
    </location>
</feature>
<feature type="sequence variant" id="VAR_022782" description="In dbSNP:rs12535348." evidence="3 5 8">
    <original>A</original>
    <variation>T</variation>
    <location>
        <position position="158"/>
    </location>
</feature>
<feature type="sequence variant" id="VAR_022783" description="In dbSNP:rs2523072." evidence="3 4 5 8">
    <original>T</original>
    <variation>S</variation>
    <location>
        <position position="187"/>
    </location>
</feature>
<feature type="sequence variant" id="VAR_056811" description="In dbSNP:rs11984293." evidence="4">
    <original>P</original>
    <variation>Q</variation>
    <location>
        <position position="238"/>
    </location>
</feature>
<feature type="sequence variant" id="VAR_056812" description="In dbSNP:rs17150982.">
    <original>A</original>
    <variation>T</variation>
    <location>
        <position position="249"/>
    </location>
</feature>
<feature type="sequence variant" id="VAR_022784" description="In dbSNP:rs2285738." evidence="3 4 5 8">
    <original>H</original>
    <variation>R</variation>
    <location>
        <position position="300"/>
    </location>
</feature>
<feature type="sequence variant" id="VAR_060609" description="In dbSNP:rs17857512." evidence="4">
    <original>N</original>
    <variation>D</variation>
    <location>
        <position position="518"/>
    </location>
</feature>
<keyword id="KW-0966">Cell projection</keyword>
<keyword id="KW-0969">Cilium</keyword>
<keyword id="KW-0963">Cytoplasm</keyword>
<keyword id="KW-0206">Cytoskeleton</keyword>
<keyword id="KW-0282">Flagellum</keyword>
<keyword id="KW-1017">Isopeptide bond</keyword>
<keyword id="KW-0597">Phosphoprotein</keyword>
<keyword id="KW-1267">Proteomics identification</keyword>
<keyword id="KW-1185">Reference proteome</keyword>
<keyword id="KW-0832">Ubl conjugation</keyword>
<gene>
    <name evidence="10" type="primary">SPMIP4</name>
    <name type="synonym">C7orf31</name>
</gene>
<sequence>MEVIHGRPYCCRELEGADILSNTFYSNELHNPLQTVTRPTASEDRYQELRESLQQCRLPWGAEREYGGIIPISLPEDHRPKYEPPRVMGKGHQHYGFGGETWPRKLPVEQFYYLTQNKKSDVYGNDSLIPKPPNSTVGEICLPYPIEHPYHTHICRGAMFPTFTSPEDLYTGIKARTQQPFPPTVPTKAYDSTVLKTRGNPYRYELIDIPMDSKKKALTWPGQGVYYDFPRGVEKNKPVFYPKPPKTFAPNTSLNSWDPICSAKEANIQRNLERSHWLTSYTHDFTGLGPMDPLELDDYHEKMVAELTRKIGFDPEPQEKFHPVFKPPRPLEGRIARLIQNRRSLEAIVQQRPRSCPDCTPRVLCNFHTFVPSSKEMVALSDNIPAGVTHKNQDIEEKIIEEQSLLSTYELPSCYPTKDLTSIYDIKPFPKITDTKKTEDLYWRQQSLKTQPTPYCKPDHWIHYENLKSPLRDQYNMCPDPVSLSKPSVLQNKQDTEAFTLEHFLSKPEEELFLNMENNEETRPVLGWIPRAGVTKPQTNLLELKNSFSKTGAQKRFHKSILEDHKDLRDNEHSGMKHQFYGHNSYYFYN</sequence>
<organism>
    <name type="scientific">Homo sapiens</name>
    <name type="common">Human</name>
    <dbReference type="NCBI Taxonomy" id="9606"/>
    <lineage>
        <taxon>Eukaryota</taxon>
        <taxon>Metazoa</taxon>
        <taxon>Chordata</taxon>
        <taxon>Craniata</taxon>
        <taxon>Vertebrata</taxon>
        <taxon>Euteleostomi</taxon>
        <taxon>Mammalia</taxon>
        <taxon>Eutheria</taxon>
        <taxon>Euarchontoglires</taxon>
        <taxon>Primates</taxon>
        <taxon>Haplorrhini</taxon>
        <taxon>Catarrhini</taxon>
        <taxon>Hominidae</taxon>
        <taxon>Homo</taxon>
    </lineage>
</organism>
<accession>Q8N865</accession>
<accession>A4D165</accession>
<accession>Q6MZV8</accession>
<accession>Q6P989</accession>
<accession>Q7LE28</accession>
<accession>Q86XK1</accession>
<accession>Q8N1H5</accession>
<accession>Q96BN4</accession>
<dbReference type="EMBL" id="AK097248">
    <property type="protein sequence ID" value="BAC04985.1"/>
    <property type="molecule type" value="mRNA"/>
</dbReference>
<dbReference type="EMBL" id="AK098189">
    <property type="protein sequence ID" value="BAC05255.1"/>
    <property type="status" value="ALT_INIT"/>
    <property type="molecule type" value="mRNA"/>
</dbReference>
<dbReference type="EMBL" id="AC004129">
    <property type="protein sequence ID" value="AAP22338.1"/>
    <property type="status" value="ALT_SEQ"/>
    <property type="molecule type" value="Genomic_DNA"/>
</dbReference>
<dbReference type="EMBL" id="CH236948">
    <property type="protein sequence ID" value="EAL24238.1"/>
    <property type="molecule type" value="Genomic_DNA"/>
</dbReference>
<dbReference type="EMBL" id="CH471073">
    <property type="protein sequence ID" value="EAW93827.1"/>
    <property type="molecule type" value="Genomic_DNA"/>
</dbReference>
<dbReference type="EMBL" id="BC015397">
    <property type="protein sequence ID" value="AAH15397.2"/>
    <property type="molecule type" value="mRNA"/>
</dbReference>
<dbReference type="EMBL" id="BC043269">
    <property type="protein sequence ID" value="AAH43269.1"/>
    <property type="molecule type" value="mRNA"/>
</dbReference>
<dbReference type="EMBL" id="BC060879">
    <property type="protein sequence ID" value="AAH60879.1"/>
    <property type="molecule type" value="mRNA"/>
</dbReference>
<dbReference type="EMBL" id="BX640851">
    <property type="protein sequence ID" value="CAE45919.1"/>
    <property type="molecule type" value="mRNA"/>
</dbReference>
<dbReference type="CCDS" id="CCDS5394.1"/>
<dbReference type="RefSeq" id="NP_001358280.1">
    <property type="nucleotide sequence ID" value="NM_001371351.1"/>
</dbReference>
<dbReference type="RefSeq" id="NP_001358281.1">
    <property type="nucleotide sequence ID" value="NM_001371352.1"/>
</dbReference>
<dbReference type="RefSeq" id="NP_620166.3">
    <property type="nucleotide sequence ID" value="NM_138811.3"/>
</dbReference>
<dbReference type="RefSeq" id="XP_005249676.1">
    <property type="nucleotide sequence ID" value="XM_005249619.3"/>
</dbReference>
<dbReference type="RefSeq" id="XP_005249677.1">
    <property type="nucleotide sequence ID" value="XM_005249620.3"/>
</dbReference>
<dbReference type="RefSeq" id="XP_011513427.1">
    <property type="nucleotide sequence ID" value="XM_011515125.2"/>
</dbReference>
<dbReference type="SMR" id="Q8N865"/>
<dbReference type="BioGRID" id="126465">
    <property type="interactions" value="15"/>
</dbReference>
<dbReference type="FunCoup" id="Q8N865">
    <property type="interactions" value="99"/>
</dbReference>
<dbReference type="IntAct" id="Q8N865">
    <property type="interactions" value="23"/>
</dbReference>
<dbReference type="STRING" id="9606.ENSP00000283905"/>
<dbReference type="iPTMnet" id="Q8N865"/>
<dbReference type="PhosphoSitePlus" id="Q8N865"/>
<dbReference type="BioMuta" id="C7orf31"/>
<dbReference type="DMDM" id="269849700"/>
<dbReference type="jPOST" id="Q8N865"/>
<dbReference type="MassIVE" id="Q8N865"/>
<dbReference type="PaxDb" id="9606-ENSP00000386604"/>
<dbReference type="PeptideAtlas" id="Q8N865"/>
<dbReference type="ProteomicsDB" id="72377"/>
<dbReference type="Antibodypedia" id="12287">
    <property type="antibodies" value="52 antibodies from 18 providers"/>
</dbReference>
<dbReference type="DNASU" id="136895"/>
<dbReference type="Ensembl" id="ENST00000283905.8">
    <property type="protein sequence ID" value="ENSP00000283905.3"/>
    <property type="gene ID" value="ENSG00000153790.12"/>
</dbReference>
<dbReference type="Ensembl" id="ENST00000409280.5">
    <property type="protein sequence ID" value="ENSP00000386604.1"/>
    <property type="gene ID" value="ENSG00000153790.12"/>
</dbReference>
<dbReference type="GeneID" id="136895"/>
<dbReference type="KEGG" id="hsa:136895"/>
<dbReference type="MANE-Select" id="ENST00000283905.8">
    <property type="protein sequence ID" value="ENSP00000283905.3"/>
    <property type="RefSeq nucleotide sequence ID" value="NM_138811.4"/>
    <property type="RefSeq protein sequence ID" value="NP_620166.3"/>
</dbReference>
<dbReference type="UCSC" id="uc003sxn.2">
    <property type="organism name" value="human"/>
</dbReference>
<dbReference type="AGR" id="HGNC:21722"/>
<dbReference type="CTD" id="136895"/>
<dbReference type="DisGeNET" id="136895"/>
<dbReference type="GeneCards" id="SPMIP4"/>
<dbReference type="HGNC" id="HGNC:21722">
    <property type="gene designation" value="SPMIP4"/>
</dbReference>
<dbReference type="HPA" id="ENSG00000153790">
    <property type="expression patterns" value="Tissue enriched (testis)"/>
</dbReference>
<dbReference type="MIM" id="616071">
    <property type="type" value="gene"/>
</dbReference>
<dbReference type="neXtProt" id="NX_Q8N865"/>
<dbReference type="OpenTargets" id="ENSG00000153790"/>
<dbReference type="PharmGKB" id="PA134924921"/>
<dbReference type="VEuPathDB" id="HostDB:ENSG00000153790"/>
<dbReference type="eggNOG" id="ENOG502QUAM">
    <property type="taxonomic scope" value="Eukaryota"/>
</dbReference>
<dbReference type="GeneTree" id="ENSGT00390000015236"/>
<dbReference type="HOGENOM" id="CLU_038659_0_0_1"/>
<dbReference type="InParanoid" id="Q8N865"/>
<dbReference type="OMA" id="DFPKCVE"/>
<dbReference type="OrthoDB" id="10040207at2759"/>
<dbReference type="PAN-GO" id="Q8N865">
    <property type="GO annotations" value="1 GO annotation based on evolutionary models"/>
</dbReference>
<dbReference type="PhylomeDB" id="Q8N865"/>
<dbReference type="TreeFam" id="TF336164"/>
<dbReference type="PathwayCommons" id="Q8N865"/>
<dbReference type="SignaLink" id="Q8N865"/>
<dbReference type="BioGRID-ORCS" id="136895">
    <property type="hits" value="13 hits in 1146 CRISPR screens"/>
</dbReference>
<dbReference type="ChiTaRS" id="C7orf31">
    <property type="organism name" value="human"/>
</dbReference>
<dbReference type="GenomeRNAi" id="136895"/>
<dbReference type="Pharos" id="Q8N865">
    <property type="development level" value="Tdark"/>
</dbReference>
<dbReference type="PRO" id="PR:Q8N865"/>
<dbReference type="Proteomes" id="UP000005640">
    <property type="component" value="Chromosome 7"/>
</dbReference>
<dbReference type="RNAct" id="Q8N865">
    <property type="molecule type" value="protein"/>
</dbReference>
<dbReference type="Bgee" id="ENSG00000153790">
    <property type="expression patterns" value="Expressed in sperm and 130 other cell types or tissues"/>
</dbReference>
<dbReference type="ExpressionAtlas" id="Q8N865">
    <property type="expression patterns" value="baseline and differential"/>
</dbReference>
<dbReference type="GO" id="GO:0005813">
    <property type="term" value="C:centrosome"/>
    <property type="evidence" value="ECO:0000314"/>
    <property type="project" value="UniProtKB"/>
</dbReference>
<dbReference type="GO" id="GO:0005737">
    <property type="term" value="C:cytoplasm"/>
    <property type="evidence" value="ECO:0007669"/>
    <property type="project" value="UniProtKB-KW"/>
</dbReference>
<dbReference type="GO" id="GO:0031514">
    <property type="term" value="C:motile cilium"/>
    <property type="evidence" value="ECO:0007669"/>
    <property type="project" value="UniProtKB-KW"/>
</dbReference>
<dbReference type="InterPro" id="IPR027886">
    <property type="entry name" value="SPMIP4"/>
</dbReference>
<dbReference type="PANTHER" id="PTHR31393">
    <property type="entry name" value="C5ORF31"/>
    <property type="match status" value="1"/>
</dbReference>
<dbReference type="PANTHER" id="PTHR31393:SF2">
    <property type="entry name" value="CHROMOSOME 7 OPEN READING FRAME 31"/>
    <property type="match status" value="1"/>
</dbReference>
<dbReference type="Pfam" id="PF15093">
    <property type="entry name" value="SPMIP4-like"/>
    <property type="match status" value="1"/>
</dbReference>